<comment type="function">
    <text evidence="1">Associates with the EF-Tu.GDP complex and induces the exchange of GDP to GTP. It remains bound to the aminoacyl-tRNA.EF-Tu.GTP complex up to the GTP hydrolysis stage on the ribosome.</text>
</comment>
<comment type="subcellular location">
    <subcellularLocation>
        <location evidence="1">Cytoplasm</location>
    </subcellularLocation>
</comment>
<comment type="similarity">
    <text evidence="1">Belongs to the EF-Ts family.</text>
</comment>
<organism>
    <name type="scientific">Streptococcus pneumoniae serotype 19F (strain G54)</name>
    <dbReference type="NCBI Taxonomy" id="512566"/>
    <lineage>
        <taxon>Bacteria</taxon>
        <taxon>Bacillati</taxon>
        <taxon>Bacillota</taxon>
        <taxon>Bacilli</taxon>
        <taxon>Lactobacillales</taxon>
        <taxon>Streptococcaceae</taxon>
        <taxon>Streptococcus</taxon>
    </lineage>
</organism>
<dbReference type="EMBL" id="CP001015">
    <property type="protein sequence ID" value="ACF56241.1"/>
    <property type="molecule type" value="Genomic_DNA"/>
</dbReference>
<dbReference type="SMR" id="B5E3W0"/>
<dbReference type="KEGG" id="spx:SPG_2160"/>
<dbReference type="HOGENOM" id="CLU_047155_0_1_9"/>
<dbReference type="GO" id="GO:0005737">
    <property type="term" value="C:cytoplasm"/>
    <property type="evidence" value="ECO:0007669"/>
    <property type="project" value="UniProtKB-SubCell"/>
</dbReference>
<dbReference type="GO" id="GO:0003746">
    <property type="term" value="F:translation elongation factor activity"/>
    <property type="evidence" value="ECO:0007669"/>
    <property type="project" value="UniProtKB-UniRule"/>
</dbReference>
<dbReference type="CDD" id="cd14275">
    <property type="entry name" value="UBA_EF-Ts"/>
    <property type="match status" value="1"/>
</dbReference>
<dbReference type="FunFam" id="1.10.286.20:FF:000004">
    <property type="entry name" value="Elongation factor Ts"/>
    <property type="match status" value="1"/>
</dbReference>
<dbReference type="FunFam" id="1.10.8.10:FF:000001">
    <property type="entry name" value="Elongation factor Ts"/>
    <property type="match status" value="1"/>
</dbReference>
<dbReference type="FunFam" id="3.30.479.20:FF:000009">
    <property type="entry name" value="Elongation factor Ts"/>
    <property type="match status" value="1"/>
</dbReference>
<dbReference type="FunFam" id="3.30.479.20:FF:000013">
    <property type="entry name" value="Elongation factor Ts"/>
    <property type="match status" value="1"/>
</dbReference>
<dbReference type="FunFam" id="3.30.479.20:FF:000016">
    <property type="entry name" value="Elongation factor Ts"/>
    <property type="match status" value="1"/>
</dbReference>
<dbReference type="Gene3D" id="1.10.286.20">
    <property type="match status" value="1"/>
</dbReference>
<dbReference type="Gene3D" id="1.10.8.10">
    <property type="entry name" value="DNA helicase RuvA subunit, C-terminal domain"/>
    <property type="match status" value="1"/>
</dbReference>
<dbReference type="Gene3D" id="3.30.479.20">
    <property type="entry name" value="Elongation factor Ts, dimerisation domain"/>
    <property type="match status" value="2"/>
</dbReference>
<dbReference type="HAMAP" id="MF_00050">
    <property type="entry name" value="EF_Ts"/>
    <property type="match status" value="1"/>
</dbReference>
<dbReference type="InterPro" id="IPR036402">
    <property type="entry name" value="EF-Ts_dimer_sf"/>
</dbReference>
<dbReference type="InterPro" id="IPR001816">
    <property type="entry name" value="Transl_elong_EFTs/EF1B"/>
</dbReference>
<dbReference type="InterPro" id="IPR014039">
    <property type="entry name" value="Transl_elong_EFTs/EF1B_dimer"/>
</dbReference>
<dbReference type="InterPro" id="IPR018101">
    <property type="entry name" value="Transl_elong_Ts_CS"/>
</dbReference>
<dbReference type="InterPro" id="IPR009060">
    <property type="entry name" value="UBA-like_sf"/>
</dbReference>
<dbReference type="NCBIfam" id="TIGR00116">
    <property type="entry name" value="tsf"/>
    <property type="match status" value="1"/>
</dbReference>
<dbReference type="PANTHER" id="PTHR11741">
    <property type="entry name" value="ELONGATION FACTOR TS"/>
    <property type="match status" value="1"/>
</dbReference>
<dbReference type="PANTHER" id="PTHR11741:SF0">
    <property type="entry name" value="ELONGATION FACTOR TS, MITOCHONDRIAL"/>
    <property type="match status" value="1"/>
</dbReference>
<dbReference type="Pfam" id="PF00889">
    <property type="entry name" value="EF_TS"/>
    <property type="match status" value="1"/>
</dbReference>
<dbReference type="SUPFAM" id="SSF54713">
    <property type="entry name" value="Elongation factor Ts (EF-Ts), dimerisation domain"/>
    <property type="match status" value="2"/>
</dbReference>
<dbReference type="SUPFAM" id="SSF46934">
    <property type="entry name" value="UBA-like"/>
    <property type="match status" value="1"/>
</dbReference>
<dbReference type="PROSITE" id="PS01126">
    <property type="entry name" value="EF_TS_1"/>
    <property type="match status" value="1"/>
</dbReference>
<dbReference type="PROSITE" id="PS01127">
    <property type="entry name" value="EF_TS_2"/>
    <property type="match status" value="1"/>
</dbReference>
<name>EFTS_STRP4</name>
<protein>
    <recommendedName>
        <fullName evidence="1">Elongation factor Ts</fullName>
        <shortName evidence="1">EF-Ts</shortName>
    </recommendedName>
</protein>
<accession>B5E3W0</accession>
<feature type="chain" id="PRO_1000189885" description="Elongation factor Ts">
    <location>
        <begin position="1"/>
        <end position="346"/>
    </location>
</feature>
<feature type="region of interest" description="Involved in Mg(2+) ion dislocation from EF-Tu" evidence="1">
    <location>
        <begin position="80"/>
        <end position="83"/>
    </location>
</feature>
<gene>
    <name evidence="1" type="primary">tsf</name>
    <name type="ordered locus">SPG_2160</name>
</gene>
<proteinExistence type="inferred from homology"/>
<evidence type="ECO:0000255" key="1">
    <source>
        <dbReference type="HAMAP-Rule" id="MF_00050"/>
    </source>
</evidence>
<reference key="1">
    <citation type="journal article" date="2001" name="Microb. Drug Resist.">
        <title>Annotated draft genomic sequence from a Streptococcus pneumoniae type 19F clinical isolate.</title>
        <authorList>
            <person name="Dopazo J."/>
            <person name="Mendoza A."/>
            <person name="Herrero J."/>
            <person name="Caldara F."/>
            <person name="Humbert Y."/>
            <person name="Friedli L."/>
            <person name="Guerrier M."/>
            <person name="Grand-Schenk E."/>
            <person name="Gandin C."/>
            <person name="de Francesco M."/>
            <person name="Polissi A."/>
            <person name="Buell G."/>
            <person name="Feger G."/>
            <person name="Garcia E."/>
            <person name="Peitsch M."/>
            <person name="Garcia-Bustos J.F."/>
        </authorList>
    </citation>
    <scope>NUCLEOTIDE SEQUENCE [LARGE SCALE GENOMIC DNA]</scope>
    <source>
        <strain>G54</strain>
    </source>
</reference>
<reference key="2">
    <citation type="submission" date="2008-03" db="EMBL/GenBank/DDBJ databases">
        <title>Pneumococcal beta glucoside metabolism investigated by whole genome comparison.</title>
        <authorList>
            <person name="Mulas L."/>
            <person name="Trappetti C."/>
            <person name="Hakenbeck R."/>
            <person name="Iannelli F."/>
            <person name="Pozzi G."/>
            <person name="Davidsen T.M."/>
            <person name="Tettelin H."/>
            <person name="Oggioni M."/>
        </authorList>
    </citation>
    <scope>NUCLEOTIDE SEQUENCE [LARGE SCALE GENOMIC DNA]</scope>
    <source>
        <strain>G54</strain>
    </source>
</reference>
<sequence length="346" mass="37378">MAEITAKLVKELREKSGAGVMDAKKALVETDGDIEKAIELLREKGMAKAAKKADRVAAEGLTGVYVNGNVAAVIEVNAETDFVAKNAQFVELVNTTAKVIAEGKPANNEESLALIMPSGETLEAAYVSATATIGEKISFRRFALIEKTDAQHFGAYQHNGGRIGVISVVEGGDEALAKQLSMHIAAMKPTVLSYKELDEQFVKDELAQLNHVIDQDNESRAMVNKPALPHLKYGSKAQLTDDVIAQAEADIKAELAAEGKPEKIWDKIIPGKMDRFMLDNTKVDQAYTLLAQVYIMDDSKTVEAYLESVNASVVEFARFEVGEGIEKAANDFEAEVAATMAAALNN</sequence>
<keyword id="KW-0963">Cytoplasm</keyword>
<keyword id="KW-0251">Elongation factor</keyword>
<keyword id="KW-0648">Protein biosynthesis</keyword>